<protein>
    <recommendedName>
        <fullName evidence="1">Shikimate dehydrogenase (NADP(+))</fullName>
        <shortName evidence="1">SDH</shortName>
        <ecNumber evidence="1">1.1.1.25</ecNumber>
    </recommendedName>
</protein>
<name>AROE_RUTMC</name>
<organism>
    <name type="scientific">Ruthia magnifica subsp. Calyptogena magnifica</name>
    <dbReference type="NCBI Taxonomy" id="413404"/>
    <lineage>
        <taxon>Bacteria</taxon>
        <taxon>Pseudomonadati</taxon>
        <taxon>Pseudomonadota</taxon>
        <taxon>Gammaproteobacteria</taxon>
        <taxon>Candidatus Pseudothioglobaceae</taxon>
        <taxon>Candidatus Ruthturnera</taxon>
    </lineage>
</organism>
<gene>
    <name evidence="1" type="primary">aroE</name>
    <name type="ordered locus">Rmag_0435</name>
</gene>
<dbReference type="EC" id="1.1.1.25" evidence="1"/>
<dbReference type="EMBL" id="CP000488">
    <property type="protein sequence ID" value="ABL02194.1"/>
    <property type="molecule type" value="Genomic_DNA"/>
</dbReference>
<dbReference type="RefSeq" id="WP_011737819.1">
    <property type="nucleotide sequence ID" value="NC_008610.1"/>
</dbReference>
<dbReference type="SMR" id="A1AW87"/>
<dbReference type="STRING" id="413404.Rmag_0435"/>
<dbReference type="KEGG" id="rma:Rmag_0435"/>
<dbReference type="eggNOG" id="COG0169">
    <property type="taxonomic scope" value="Bacteria"/>
</dbReference>
<dbReference type="HOGENOM" id="CLU_044063_2_1_6"/>
<dbReference type="OrthoDB" id="9776868at2"/>
<dbReference type="UniPathway" id="UPA00053">
    <property type="reaction ID" value="UER00087"/>
</dbReference>
<dbReference type="Proteomes" id="UP000002587">
    <property type="component" value="Chromosome"/>
</dbReference>
<dbReference type="GO" id="GO:0005829">
    <property type="term" value="C:cytosol"/>
    <property type="evidence" value="ECO:0007669"/>
    <property type="project" value="TreeGrafter"/>
</dbReference>
<dbReference type="GO" id="GO:0050661">
    <property type="term" value="F:NADP binding"/>
    <property type="evidence" value="ECO:0007669"/>
    <property type="project" value="InterPro"/>
</dbReference>
<dbReference type="GO" id="GO:0004764">
    <property type="term" value="F:shikimate 3-dehydrogenase (NADP+) activity"/>
    <property type="evidence" value="ECO:0007669"/>
    <property type="project" value="UniProtKB-UniRule"/>
</dbReference>
<dbReference type="GO" id="GO:0008652">
    <property type="term" value="P:amino acid biosynthetic process"/>
    <property type="evidence" value="ECO:0007669"/>
    <property type="project" value="UniProtKB-KW"/>
</dbReference>
<dbReference type="GO" id="GO:0009073">
    <property type="term" value="P:aromatic amino acid family biosynthetic process"/>
    <property type="evidence" value="ECO:0007669"/>
    <property type="project" value="UniProtKB-KW"/>
</dbReference>
<dbReference type="GO" id="GO:0009423">
    <property type="term" value="P:chorismate biosynthetic process"/>
    <property type="evidence" value="ECO:0007669"/>
    <property type="project" value="UniProtKB-UniRule"/>
</dbReference>
<dbReference type="GO" id="GO:0019632">
    <property type="term" value="P:shikimate metabolic process"/>
    <property type="evidence" value="ECO:0007669"/>
    <property type="project" value="InterPro"/>
</dbReference>
<dbReference type="CDD" id="cd01065">
    <property type="entry name" value="NAD_bind_Shikimate_DH"/>
    <property type="match status" value="1"/>
</dbReference>
<dbReference type="FunFam" id="3.40.50.10860:FF:000006">
    <property type="entry name" value="Shikimate dehydrogenase (NADP(+))"/>
    <property type="match status" value="1"/>
</dbReference>
<dbReference type="Gene3D" id="3.40.50.10860">
    <property type="entry name" value="Leucine Dehydrogenase, chain A, domain 1"/>
    <property type="match status" value="1"/>
</dbReference>
<dbReference type="Gene3D" id="3.40.50.720">
    <property type="entry name" value="NAD(P)-binding Rossmann-like Domain"/>
    <property type="match status" value="1"/>
</dbReference>
<dbReference type="HAMAP" id="MF_00222">
    <property type="entry name" value="Shikimate_DH_AroE"/>
    <property type="match status" value="1"/>
</dbReference>
<dbReference type="InterPro" id="IPR046346">
    <property type="entry name" value="Aminoacid_DH-like_N_sf"/>
</dbReference>
<dbReference type="InterPro" id="IPR036291">
    <property type="entry name" value="NAD(P)-bd_dom_sf"/>
</dbReference>
<dbReference type="InterPro" id="IPR041121">
    <property type="entry name" value="SDH_C"/>
</dbReference>
<dbReference type="InterPro" id="IPR011342">
    <property type="entry name" value="Shikimate_DH"/>
</dbReference>
<dbReference type="InterPro" id="IPR013708">
    <property type="entry name" value="Shikimate_DH-bd_N"/>
</dbReference>
<dbReference type="InterPro" id="IPR022893">
    <property type="entry name" value="Shikimate_DH_fam"/>
</dbReference>
<dbReference type="InterPro" id="IPR006151">
    <property type="entry name" value="Shikm_DH/Glu-tRNA_Rdtase"/>
</dbReference>
<dbReference type="NCBIfam" id="TIGR00507">
    <property type="entry name" value="aroE"/>
    <property type="match status" value="1"/>
</dbReference>
<dbReference type="NCBIfam" id="NF001310">
    <property type="entry name" value="PRK00258.1-2"/>
    <property type="match status" value="1"/>
</dbReference>
<dbReference type="PANTHER" id="PTHR21089:SF1">
    <property type="entry name" value="BIFUNCTIONAL 3-DEHYDROQUINATE DEHYDRATASE_SHIKIMATE DEHYDROGENASE, CHLOROPLASTIC"/>
    <property type="match status" value="1"/>
</dbReference>
<dbReference type="PANTHER" id="PTHR21089">
    <property type="entry name" value="SHIKIMATE DEHYDROGENASE"/>
    <property type="match status" value="1"/>
</dbReference>
<dbReference type="Pfam" id="PF18317">
    <property type="entry name" value="SDH_C"/>
    <property type="match status" value="1"/>
</dbReference>
<dbReference type="Pfam" id="PF01488">
    <property type="entry name" value="Shikimate_DH"/>
    <property type="match status" value="1"/>
</dbReference>
<dbReference type="Pfam" id="PF08501">
    <property type="entry name" value="Shikimate_dh_N"/>
    <property type="match status" value="1"/>
</dbReference>
<dbReference type="SUPFAM" id="SSF53223">
    <property type="entry name" value="Aminoacid dehydrogenase-like, N-terminal domain"/>
    <property type="match status" value="1"/>
</dbReference>
<dbReference type="SUPFAM" id="SSF51735">
    <property type="entry name" value="NAD(P)-binding Rossmann-fold domains"/>
    <property type="match status" value="1"/>
</dbReference>
<evidence type="ECO:0000255" key="1">
    <source>
        <dbReference type="HAMAP-Rule" id="MF_00222"/>
    </source>
</evidence>
<feature type="chain" id="PRO_1000021326" description="Shikimate dehydrogenase (NADP(+))">
    <location>
        <begin position="1"/>
        <end position="267"/>
    </location>
</feature>
<feature type="active site" description="Proton acceptor" evidence="1">
    <location>
        <position position="65"/>
    </location>
</feature>
<feature type="binding site" evidence="1">
    <location>
        <begin position="14"/>
        <end position="16"/>
    </location>
    <ligand>
        <name>shikimate</name>
        <dbReference type="ChEBI" id="CHEBI:36208"/>
    </ligand>
</feature>
<feature type="binding site" evidence="1">
    <location>
        <position position="61"/>
    </location>
    <ligand>
        <name>shikimate</name>
        <dbReference type="ChEBI" id="CHEBI:36208"/>
    </ligand>
</feature>
<feature type="binding site" evidence="1">
    <location>
        <position position="86"/>
    </location>
    <ligand>
        <name>shikimate</name>
        <dbReference type="ChEBI" id="CHEBI:36208"/>
    </ligand>
</feature>
<feature type="binding site" evidence="1">
    <location>
        <position position="101"/>
    </location>
    <ligand>
        <name>shikimate</name>
        <dbReference type="ChEBI" id="CHEBI:36208"/>
    </ligand>
</feature>
<feature type="binding site" evidence="1">
    <location>
        <begin position="126"/>
        <end position="130"/>
    </location>
    <ligand>
        <name>NADP(+)</name>
        <dbReference type="ChEBI" id="CHEBI:58349"/>
    </ligand>
</feature>
<feature type="binding site" evidence="1">
    <location>
        <begin position="150"/>
        <end position="155"/>
    </location>
    <ligand>
        <name>NADP(+)</name>
        <dbReference type="ChEBI" id="CHEBI:58349"/>
    </ligand>
</feature>
<feature type="binding site" evidence="1">
    <location>
        <position position="213"/>
    </location>
    <ligand>
        <name>NADP(+)</name>
        <dbReference type="ChEBI" id="CHEBI:58349"/>
    </ligand>
</feature>
<feature type="binding site" evidence="1">
    <location>
        <position position="215"/>
    </location>
    <ligand>
        <name>shikimate</name>
        <dbReference type="ChEBI" id="CHEBI:36208"/>
    </ligand>
</feature>
<feature type="binding site" evidence="1">
    <location>
        <position position="236"/>
    </location>
    <ligand>
        <name>NADP(+)</name>
        <dbReference type="ChEBI" id="CHEBI:58349"/>
    </ligand>
</feature>
<proteinExistence type="inferred from homology"/>
<sequence>MYKFAVFGNPIKHSLSPNIHIQFAQQTGFEVSYDKILAPIDDFSSSAQAFINQGANGFNITVPFKLDAFKFASELTLNAQIAGAVNTIKIEQDKIIGENTDGIGLVNDLTHNLGIELKDKVILILGAGGATQGILLPLLKQQPNHVMIANRTPFKAIKLAKDFAKFGKTCGFDLDKIKHDPVNIIINATSTSLYGKMPDIASGVANNAICYDLMYGKQTPFMDWATINHGSMISDGLGMLIEQAAVAFEFWTGVKPNTEQVLSNLRS</sequence>
<comment type="function">
    <text evidence="1">Involved in the biosynthesis of the chorismate, which leads to the biosynthesis of aromatic amino acids. Catalyzes the reversible NADPH linked reduction of 3-dehydroshikimate (DHSA) to yield shikimate (SA).</text>
</comment>
<comment type="catalytic activity">
    <reaction evidence="1">
        <text>shikimate + NADP(+) = 3-dehydroshikimate + NADPH + H(+)</text>
        <dbReference type="Rhea" id="RHEA:17737"/>
        <dbReference type="ChEBI" id="CHEBI:15378"/>
        <dbReference type="ChEBI" id="CHEBI:16630"/>
        <dbReference type="ChEBI" id="CHEBI:36208"/>
        <dbReference type="ChEBI" id="CHEBI:57783"/>
        <dbReference type="ChEBI" id="CHEBI:58349"/>
        <dbReference type="EC" id="1.1.1.25"/>
    </reaction>
</comment>
<comment type="pathway">
    <text evidence="1">Metabolic intermediate biosynthesis; chorismate biosynthesis; chorismate from D-erythrose 4-phosphate and phosphoenolpyruvate: step 4/7.</text>
</comment>
<comment type="subunit">
    <text evidence="1">Homodimer.</text>
</comment>
<comment type="similarity">
    <text evidence="1">Belongs to the shikimate dehydrogenase family.</text>
</comment>
<accession>A1AW87</accession>
<reference key="1">
    <citation type="journal article" date="2007" name="Science">
        <title>The Calyptogena magnifica chemoautotrophic symbiont genome.</title>
        <authorList>
            <person name="Newton I.L.G."/>
            <person name="Woyke T."/>
            <person name="Auchtung T.A."/>
            <person name="Dilly G.F."/>
            <person name="Dutton R.J."/>
            <person name="Fisher M.C."/>
            <person name="Fontanez K.M."/>
            <person name="Lau E."/>
            <person name="Stewart F.J."/>
            <person name="Richardson P.M."/>
            <person name="Barry K.W."/>
            <person name="Saunders E."/>
            <person name="Detter J.C."/>
            <person name="Wu D."/>
            <person name="Eisen J.A."/>
            <person name="Cavanaugh C.M."/>
        </authorList>
    </citation>
    <scope>NUCLEOTIDE SEQUENCE [LARGE SCALE GENOMIC DNA]</scope>
</reference>
<keyword id="KW-0028">Amino-acid biosynthesis</keyword>
<keyword id="KW-0057">Aromatic amino acid biosynthesis</keyword>
<keyword id="KW-0521">NADP</keyword>
<keyword id="KW-0560">Oxidoreductase</keyword>